<keyword id="KW-0067">ATP-binding</keyword>
<keyword id="KW-0963">Cytoplasm</keyword>
<keyword id="KW-0547">Nucleotide-binding</keyword>
<keyword id="KW-0548">Nucleotidyltransferase</keyword>
<keyword id="KW-1185">Reference proteome</keyword>
<keyword id="KW-0808">Transferase</keyword>
<keyword id="KW-0819">tRNA processing</keyword>
<sequence length="198" mass="22355">MMNFIRTLLIYEIILLKIYHIIKLLHQQQVVAYPTEAMFGLGCDPDSEKAVHTLLTLKKRDWQKGLILVAANYEQLANYIDDNSLNINQRARMFSLWPGPITWTIPARTTTPCWLTGKFSTLAVRISAFKPVRMLCLAFGKPIVSTSANVSGQSPARNICEVRQQFGAAFPVMDQIIEGRYSPSEIRDAISGQLIRRG</sequence>
<evidence type="ECO:0000255" key="1">
    <source>
        <dbReference type="HAMAP-Rule" id="MF_01852"/>
    </source>
</evidence>
<organism>
    <name type="scientific">Baumannia cicadellinicola subsp. Homalodisca coagulata</name>
    <dbReference type="NCBI Taxonomy" id="374463"/>
    <lineage>
        <taxon>Bacteria</taxon>
        <taxon>Pseudomonadati</taxon>
        <taxon>Pseudomonadota</taxon>
        <taxon>Gammaproteobacteria</taxon>
        <taxon>Candidatus Palibaumannia</taxon>
    </lineage>
</organism>
<proteinExistence type="inferred from homology"/>
<feature type="chain" id="PRO_0000352899" description="Threonylcarbamoyl-AMP synthase">
    <location>
        <begin position="1"/>
        <end position="198"/>
    </location>
</feature>
<feature type="domain" description="YrdC-like" evidence="1">
    <location>
        <begin position="15"/>
        <end position="198"/>
    </location>
</feature>
<gene>
    <name evidence="1" type="primary">tsaC</name>
    <name type="synonym">rimN</name>
    <name type="ordered locus">BCI_0417</name>
</gene>
<accession>Q1LT55</accession>
<reference key="1">
    <citation type="journal article" date="2006" name="PLoS Biol.">
        <title>Metabolic complementarity and genomics of the dual bacterial symbiosis of sharpshooters.</title>
        <authorList>
            <person name="Wu D."/>
            <person name="Daugherty S.C."/>
            <person name="Van Aken S.E."/>
            <person name="Pai G.H."/>
            <person name="Watkins K.L."/>
            <person name="Khouri H."/>
            <person name="Tallon L.J."/>
            <person name="Zaborsky J.M."/>
            <person name="Dunbar H.E."/>
            <person name="Tran P.L."/>
            <person name="Moran N.A."/>
            <person name="Eisen J.A."/>
        </authorList>
    </citation>
    <scope>NUCLEOTIDE SEQUENCE [LARGE SCALE GENOMIC DNA]</scope>
</reference>
<dbReference type="EC" id="2.7.7.87" evidence="1"/>
<dbReference type="EMBL" id="CP000238">
    <property type="protein sequence ID" value="ABF13845.1"/>
    <property type="molecule type" value="Genomic_DNA"/>
</dbReference>
<dbReference type="RefSeq" id="WP_011520592.1">
    <property type="nucleotide sequence ID" value="NC_007984.1"/>
</dbReference>
<dbReference type="SMR" id="Q1LT55"/>
<dbReference type="STRING" id="374463.BCI_0417"/>
<dbReference type="KEGG" id="bci:BCI_0417"/>
<dbReference type="HOGENOM" id="CLU_031397_6_0_6"/>
<dbReference type="Proteomes" id="UP000002427">
    <property type="component" value="Chromosome"/>
</dbReference>
<dbReference type="GO" id="GO:0005737">
    <property type="term" value="C:cytoplasm"/>
    <property type="evidence" value="ECO:0007669"/>
    <property type="project" value="UniProtKB-SubCell"/>
</dbReference>
<dbReference type="GO" id="GO:0005524">
    <property type="term" value="F:ATP binding"/>
    <property type="evidence" value="ECO:0007669"/>
    <property type="project" value="UniProtKB-UniRule"/>
</dbReference>
<dbReference type="GO" id="GO:0003725">
    <property type="term" value="F:double-stranded RNA binding"/>
    <property type="evidence" value="ECO:0007669"/>
    <property type="project" value="InterPro"/>
</dbReference>
<dbReference type="GO" id="GO:0061710">
    <property type="term" value="F:L-threonylcarbamoyladenylate synthase"/>
    <property type="evidence" value="ECO:0007669"/>
    <property type="project" value="UniProtKB-EC"/>
</dbReference>
<dbReference type="GO" id="GO:0000049">
    <property type="term" value="F:tRNA binding"/>
    <property type="evidence" value="ECO:0007669"/>
    <property type="project" value="TreeGrafter"/>
</dbReference>
<dbReference type="GO" id="GO:0006450">
    <property type="term" value="P:regulation of translational fidelity"/>
    <property type="evidence" value="ECO:0007669"/>
    <property type="project" value="TreeGrafter"/>
</dbReference>
<dbReference type="GO" id="GO:0002949">
    <property type="term" value="P:tRNA threonylcarbamoyladenosine modification"/>
    <property type="evidence" value="ECO:0007669"/>
    <property type="project" value="UniProtKB-UniRule"/>
</dbReference>
<dbReference type="FunFam" id="3.90.870.10:FF:000004">
    <property type="entry name" value="Threonylcarbamoyl-AMP synthase"/>
    <property type="match status" value="1"/>
</dbReference>
<dbReference type="Gene3D" id="3.90.870.10">
    <property type="entry name" value="DHBP synthase"/>
    <property type="match status" value="1"/>
</dbReference>
<dbReference type="HAMAP" id="MF_01852">
    <property type="entry name" value="TsaC"/>
    <property type="match status" value="1"/>
</dbReference>
<dbReference type="InterPro" id="IPR017945">
    <property type="entry name" value="DHBP_synth_RibB-like_a/b_dom"/>
</dbReference>
<dbReference type="InterPro" id="IPR006070">
    <property type="entry name" value="Sua5-like_dom"/>
</dbReference>
<dbReference type="InterPro" id="IPR023535">
    <property type="entry name" value="TC-AMP_synthase"/>
</dbReference>
<dbReference type="InterPro" id="IPR050156">
    <property type="entry name" value="TC-AMP_synthase_SUA5"/>
</dbReference>
<dbReference type="PANTHER" id="PTHR17490">
    <property type="entry name" value="SUA5"/>
    <property type="match status" value="1"/>
</dbReference>
<dbReference type="PANTHER" id="PTHR17490:SF18">
    <property type="entry name" value="THREONYLCARBAMOYL-AMP SYNTHASE"/>
    <property type="match status" value="1"/>
</dbReference>
<dbReference type="Pfam" id="PF01300">
    <property type="entry name" value="Sua5_yciO_yrdC"/>
    <property type="match status" value="1"/>
</dbReference>
<dbReference type="SUPFAM" id="SSF55821">
    <property type="entry name" value="YrdC/RibB"/>
    <property type="match status" value="1"/>
</dbReference>
<dbReference type="PROSITE" id="PS51163">
    <property type="entry name" value="YRDC"/>
    <property type="match status" value="1"/>
</dbReference>
<name>TSAC_BAUCH</name>
<protein>
    <recommendedName>
        <fullName evidence="1">Threonylcarbamoyl-AMP synthase</fullName>
        <shortName evidence="1">TC-AMP synthase</shortName>
        <ecNumber evidence="1">2.7.7.87</ecNumber>
    </recommendedName>
    <alternativeName>
        <fullName evidence="1">L-threonylcarbamoyladenylate synthase</fullName>
    </alternativeName>
    <alternativeName>
        <fullName evidence="1">t(6)A37 threonylcarbamoyladenosine biosynthesis protein TsaC</fullName>
    </alternativeName>
    <alternativeName>
        <fullName evidence="1">tRNA threonylcarbamoyladenosine biosynthesis protein TsaC</fullName>
    </alternativeName>
</protein>
<comment type="function">
    <text evidence="1">Required for the formation of a threonylcarbamoyl group on adenosine at position 37 (t(6)A37) in tRNAs that read codons beginning with adenine. Catalyzes the conversion of L-threonine, HCO(3)(-)/CO(2) and ATP to give threonylcarbamoyl-AMP (TC-AMP) as the acyladenylate intermediate, with the release of diphosphate.</text>
</comment>
<comment type="catalytic activity">
    <reaction evidence="1">
        <text>L-threonine + hydrogencarbonate + ATP = L-threonylcarbamoyladenylate + diphosphate + H2O</text>
        <dbReference type="Rhea" id="RHEA:36407"/>
        <dbReference type="ChEBI" id="CHEBI:15377"/>
        <dbReference type="ChEBI" id="CHEBI:17544"/>
        <dbReference type="ChEBI" id="CHEBI:30616"/>
        <dbReference type="ChEBI" id="CHEBI:33019"/>
        <dbReference type="ChEBI" id="CHEBI:57926"/>
        <dbReference type="ChEBI" id="CHEBI:73682"/>
        <dbReference type="EC" id="2.7.7.87"/>
    </reaction>
</comment>
<comment type="subcellular location">
    <subcellularLocation>
        <location evidence="1">Cytoplasm</location>
    </subcellularLocation>
</comment>
<comment type="similarity">
    <text evidence="1">Belongs to the SUA5 family. TsaC subfamily.</text>
</comment>